<protein>
    <recommendedName>
        <fullName evidence="1">Ribose-5-phosphate isomerase A 1</fullName>
        <ecNumber evidence="1">5.3.1.6</ecNumber>
    </recommendedName>
    <alternativeName>
        <fullName evidence="1">Phosphoriboisomerase A 1</fullName>
        <shortName evidence="1">PRI 1</shortName>
    </alternativeName>
</protein>
<feature type="chain" id="PRO_0000158501" description="Ribose-5-phosphate isomerase A 1">
    <location>
        <begin position="1"/>
        <end position="218"/>
    </location>
</feature>
<feature type="active site" description="Proton acceptor" evidence="1">
    <location>
        <position position="103"/>
    </location>
</feature>
<feature type="binding site" evidence="1">
    <location>
        <begin position="28"/>
        <end position="31"/>
    </location>
    <ligand>
        <name>substrate</name>
    </ligand>
</feature>
<feature type="binding site" evidence="1">
    <location>
        <begin position="81"/>
        <end position="84"/>
    </location>
    <ligand>
        <name>substrate</name>
    </ligand>
</feature>
<feature type="binding site" evidence="1">
    <location>
        <begin position="94"/>
        <end position="97"/>
    </location>
    <ligand>
        <name>substrate</name>
    </ligand>
</feature>
<feature type="binding site" evidence="1">
    <location>
        <position position="121"/>
    </location>
    <ligand>
        <name>substrate</name>
    </ligand>
</feature>
<sequence>MTQDELKKAVGWAALDYVKPGTIVGVGTGSTAAHFIDALGSIKHQIEGAVSSSDASTAKLKSYGIPVFDCNDVDVLDIYVDGADEINGQMQMIKGGGAALTREKIIAAIARKFICIADESKQVGVLGKFPLPVEVIPMARSYVARELIKLGGLPEYRQNVLTDNGNVILDVHNLSILDAIALENQINGIAGVVTVGLFANRGADVALIGTANGVKVIG</sequence>
<gene>
    <name evidence="1" type="primary">rpiA1</name>
    <name type="ordered locus">YPO0915</name>
    <name type="ordered locus">y3302</name>
    <name type="ordered locus">YP_3612</name>
</gene>
<name>RPIA1_YERPE</name>
<evidence type="ECO:0000255" key="1">
    <source>
        <dbReference type="HAMAP-Rule" id="MF_00170"/>
    </source>
</evidence>
<accession>Q8ZHH8</accession>
<accession>Q0WIC5</accession>
<proteinExistence type="inferred from homology"/>
<dbReference type="EC" id="5.3.1.6" evidence="1"/>
<dbReference type="EMBL" id="AL590842">
    <property type="protein sequence ID" value="CAL19582.1"/>
    <property type="molecule type" value="Genomic_DNA"/>
</dbReference>
<dbReference type="EMBL" id="AE009952">
    <property type="protein sequence ID" value="AAM86852.1"/>
    <property type="molecule type" value="Genomic_DNA"/>
</dbReference>
<dbReference type="EMBL" id="AE017042">
    <property type="protein sequence ID" value="AAS63762.1"/>
    <property type="molecule type" value="Genomic_DNA"/>
</dbReference>
<dbReference type="PIR" id="AD0112">
    <property type="entry name" value="AD0112"/>
</dbReference>
<dbReference type="RefSeq" id="YP_002345963.1">
    <property type="nucleotide sequence ID" value="NC_003143.1"/>
</dbReference>
<dbReference type="SMR" id="Q8ZHH8"/>
<dbReference type="STRING" id="214092.YPO0915"/>
<dbReference type="PaxDb" id="214092-YPO0915"/>
<dbReference type="DNASU" id="1148249"/>
<dbReference type="EnsemblBacteria" id="AAS63762">
    <property type="protein sequence ID" value="AAS63762"/>
    <property type="gene ID" value="YP_3612"/>
</dbReference>
<dbReference type="KEGG" id="ype:YPO0915"/>
<dbReference type="KEGG" id="ypk:y3302"/>
<dbReference type="KEGG" id="ypm:YP_3612"/>
<dbReference type="PATRIC" id="fig|214092.21.peg.1190"/>
<dbReference type="eggNOG" id="COG0120">
    <property type="taxonomic scope" value="Bacteria"/>
</dbReference>
<dbReference type="HOGENOM" id="CLU_056590_1_1_6"/>
<dbReference type="OMA" id="ACHVQEK"/>
<dbReference type="OrthoDB" id="5870696at2"/>
<dbReference type="UniPathway" id="UPA00115">
    <property type="reaction ID" value="UER00412"/>
</dbReference>
<dbReference type="Proteomes" id="UP000000815">
    <property type="component" value="Chromosome"/>
</dbReference>
<dbReference type="Proteomes" id="UP000001019">
    <property type="component" value="Chromosome"/>
</dbReference>
<dbReference type="Proteomes" id="UP000002490">
    <property type="component" value="Chromosome"/>
</dbReference>
<dbReference type="GO" id="GO:0005829">
    <property type="term" value="C:cytosol"/>
    <property type="evidence" value="ECO:0000318"/>
    <property type="project" value="GO_Central"/>
</dbReference>
<dbReference type="GO" id="GO:0004751">
    <property type="term" value="F:ribose-5-phosphate isomerase activity"/>
    <property type="evidence" value="ECO:0000318"/>
    <property type="project" value="GO_Central"/>
</dbReference>
<dbReference type="GO" id="GO:0006014">
    <property type="term" value="P:D-ribose metabolic process"/>
    <property type="evidence" value="ECO:0000318"/>
    <property type="project" value="GO_Central"/>
</dbReference>
<dbReference type="GO" id="GO:0009052">
    <property type="term" value="P:pentose-phosphate shunt, non-oxidative branch"/>
    <property type="evidence" value="ECO:0000318"/>
    <property type="project" value="GO_Central"/>
</dbReference>
<dbReference type="CDD" id="cd01398">
    <property type="entry name" value="RPI_A"/>
    <property type="match status" value="1"/>
</dbReference>
<dbReference type="FunFam" id="3.30.70.260:FF:000004">
    <property type="entry name" value="Ribose-5-phosphate isomerase A"/>
    <property type="match status" value="1"/>
</dbReference>
<dbReference type="FunFam" id="3.40.50.1360:FF:000001">
    <property type="entry name" value="Ribose-5-phosphate isomerase A"/>
    <property type="match status" value="1"/>
</dbReference>
<dbReference type="Gene3D" id="3.30.70.260">
    <property type="match status" value="1"/>
</dbReference>
<dbReference type="Gene3D" id="3.40.50.1360">
    <property type="match status" value="1"/>
</dbReference>
<dbReference type="HAMAP" id="MF_00170">
    <property type="entry name" value="Rib_5P_isom_A"/>
    <property type="match status" value="1"/>
</dbReference>
<dbReference type="InterPro" id="IPR037171">
    <property type="entry name" value="NagB/RpiA_transferase-like"/>
</dbReference>
<dbReference type="InterPro" id="IPR020672">
    <property type="entry name" value="Ribose5P_isomerase_typA_subgr"/>
</dbReference>
<dbReference type="InterPro" id="IPR004788">
    <property type="entry name" value="Ribose5P_isomerase_type_A"/>
</dbReference>
<dbReference type="NCBIfam" id="NF001924">
    <property type="entry name" value="PRK00702.1"/>
    <property type="match status" value="1"/>
</dbReference>
<dbReference type="NCBIfam" id="TIGR00021">
    <property type="entry name" value="rpiA"/>
    <property type="match status" value="1"/>
</dbReference>
<dbReference type="PANTHER" id="PTHR11934">
    <property type="entry name" value="RIBOSE-5-PHOSPHATE ISOMERASE"/>
    <property type="match status" value="1"/>
</dbReference>
<dbReference type="PANTHER" id="PTHR11934:SF0">
    <property type="entry name" value="RIBOSE-5-PHOSPHATE ISOMERASE"/>
    <property type="match status" value="1"/>
</dbReference>
<dbReference type="Pfam" id="PF06026">
    <property type="entry name" value="Rib_5-P_isom_A"/>
    <property type="match status" value="1"/>
</dbReference>
<dbReference type="SUPFAM" id="SSF75445">
    <property type="entry name" value="D-ribose-5-phosphate isomerase (RpiA), lid domain"/>
    <property type="match status" value="1"/>
</dbReference>
<dbReference type="SUPFAM" id="SSF100950">
    <property type="entry name" value="NagB/RpiA/CoA transferase-like"/>
    <property type="match status" value="1"/>
</dbReference>
<comment type="function">
    <text evidence="1">Catalyzes the reversible conversion of ribose-5-phosphate to ribulose 5-phosphate.</text>
</comment>
<comment type="catalytic activity">
    <reaction evidence="1">
        <text>aldehydo-D-ribose 5-phosphate = D-ribulose 5-phosphate</text>
        <dbReference type="Rhea" id="RHEA:14657"/>
        <dbReference type="ChEBI" id="CHEBI:58121"/>
        <dbReference type="ChEBI" id="CHEBI:58273"/>
        <dbReference type="EC" id="5.3.1.6"/>
    </reaction>
</comment>
<comment type="pathway">
    <text evidence="1">Carbohydrate degradation; pentose phosphate pathway; D-ribose 5-phosphate from D-ribulose 5-phosphate (non-oxidative stage): step 1/1.</text>
</comment>
<comment type="subunit">
    <text evidence="1">Homodimer.</text>
</comment>
<comment type="similarity">
    <text evidence="1">Belongs to the ribose 5-phosphate isomerase family.</text>
</comment>
<keyword id="KW-0413">Isomerase</keyword>
<keyword id="KW-1185">Reference proteome</keyword>
<reference key="1">
    <citation type="journal article" date="2001" name="Nature">
        <title>Genome sequence of Yersinia pestis, the causative agent of plague.</title>
        <authorList>
            <person name="Parkhill J."/>
            <person name="Wren B.W."/>
            <person name="Thomson N.R."/>
            <person name="Titball R.W."/>
            <person name="Holden M.T.G."/>
            <person name="Prentice M.B."/>
            <person name="Sebaihia M."/>
            <person name="James K.D."/>
            <person name="Churcher C.M."/>
            <person name="Mungall K.L."/>
            <person name="Baker S."/>
            <person name="Basham D."/>
            <person name="Bentley S.D."/>
            <person name="Brooks K."/>
            <person name="Cerdeno-Tarraga A.-M."/>
            <person name="Chillingworth T."/>
            <person name="Cronin A."/>
            <person name="Davies R.M."/>
            <person name="Davis P."/>
            <person name="Dougan G."/>
            <person name="Feltwell T."/>
            <person name="Hamlin N."/>
            <person name="Holroyd S."/>
            <person name="Jagels K."/>
            <person name="Karlyshev A.V."/>
            <person name="Leather S."/>
            <person name="Moule S."/>
            <person name="Oyston P.C.F."/>
            <person name="Quail M.A."/>
            <person name="Rutherford K.M."/>
            <person name="Simmonds M."/>
            <person name="Skelton J."/>
            <person name="Stevens K."/>
            <person name="Whitehead S."/>
            <person name="Barrell B.G."/>
        </authorList>
    </citation>
    <scope>NUCLEOTIDE SEQUENCE [LARGE SCALE GENOMIC DNA]</scope>
    <source>
        <strain>CO-92 / Biovar Orientalis</strain>
    </source>
</reference>
<reference key="2">
    <citation type="journal article" date="2002" name="J. Bacteriol.">
        <title>Genome sequence of Yersinia pestis KIM.</title>
        <authorList>
            <person name="Deng W."/>
            <person name="Burland V."/>
            <person name="Plunkett G. III"/>
            <person name="Boutin A."/>
            <person name="Mayhew G.F."/>
            <person name="Liss P."/>
            <person name="Perna N.T."/>
            <person name="Rose D.J."/>
            <person name="Mau B."/>
            <person name="Zhou S."/>
            <person name="Schwartz D.C."/>
            <person name="Fetherston J.D."/>
            <person name="Lindler L.E."/>
            <person name="Brubaker R.R."/>
            <person name="Plano G.V."/>
            <person name="Straley S.C."/>
            <person name="McDonough K.A."/>
            <person name="Nilles M.L."/>
            <person name="Matson J.S."/>
            <person name="Blattner F.R."/>
            <person name="Perry R.D."/>
        </authorList>
    </citation>
    <scope>NUCLEOTIDE SEQUENCE [LARGE SCALE GENOMIC DNA]</scope>
    <source>
        <strain>KIM10+ / Biovar Mediaevalis</strain>
    </source>
</reference>
<reference key="3">
    <citation type="journal article" date="2004" name="DNA Res.">
        <title>Complete genome sequence of Yersinia pestis strain 91001, an isolate avirulent to humans.</title>
        <authorList>
            <person name="Song Y."/>
            <person name="Tong Z."/>
            <person name="Wang J."/>
            <person name="Wang L."/>
            <person name="Guo Z."/>
            <person name="Han Y."/>
            <person name="Zhang J."/>
            <person name="Pei D."/>
            <person name="Zhou D."/>
            <person name="Qin H."/>
            <person name="Pang X."/>
            <person name="Han Y."/>
            <person name="Zhai J."/>
            <person name="Li M."/>
            <person name="Cui B."/>
            <person name="Qi Z."/>
            <person name="Jin L."/>
            <person name="Dai R."/>
            <person name="Chen F."/>
            <person name="Li S."/>
            <person name="Ye C."/>
            <person name="Du Z."/>
            <person name="Lin W."/>
            <person name="Wang J."/>
            <person name="Yu J."/>
            <person name="Yang H."/>
            <person name="Wang J."/>
            <person name="Huang P."/>
            <person name="Yang R."/>
        </authorList>
    </citation>
    <scope>NUCLEOTIDE SEQUENCE [LARGE SCALE GENOMIC DNA]</scope>
    <source>
        <strain>91001 / Biovar Mediaevalis</strain>
    </source>
</reference>
<organism>
    <name type="scientific">Yersinia pestis</name>
    <dbReference type="NCBI Taxonomy" id="632"/>
    <lineage>
        <taxon>Bacteria</taxon>
        <taxon>Pseudomonadati</taxon>
        <taxon>Pseudomonadota</taxon>
        <taxon>Gammaproteobacteria</taxon>
        <taxon>Enterobacterales</taxon>
        <taxon>Yersiniaceae</taxon>
        <taxon>Yersinia</taxon>
    </lineage>
</organism>